<evidence type="ECO:0000255" key="1">
    <source>
        <dbReference type="HAMAP-Rule" id="MF_01852"/>
    </source>
</evidence>
<evidence type="ECO:0000305" key="2"/>
<proteinExistence type="inferred from homology"/>
<comment type="function">
    <text evidence="1">Required for the formation of a threonylcarbamoyl group on adenosine at position 37 (t(6)A37) in tRNAs that read codons beginning with adenine. Catalyzes the conversion of L-threonine, HCO(3)(-)/CO(2) and ATP to give threonylcarbamoyl-AMP (TC-AMP) as the acyladenylate intermediate, with the release of diphosphate.</text>
</comment>
<comment type="catalytic activity">
    <reaction evidence="1">
        <text>L-threonine + hydrogencarbonate + ATP = L-threonylcarbamoyladenylate + diphosphate + H2O</text>
        <dbReference type="Rhea" id="RHEA:36407"/>
        <dbReference type="ChEBI" id="CHEBI:15377"/>
        <dbReference type="ChEBI" id="CHEBI:17544"/>
        <dbReference type="ChEBI" id="CHEBI:30616"/>
        <dbReference type="ChEBI" id="CHEBI:33019"/>
        <dbReference type="ChEBI" id="CHEBI:57926"/>
        <dbReference type="ChEBI" id="CHEBI:73682"/>
        <dbReference type="EC" id="2.7.7.87"/>
    </reaction>
</comment>
<comment type="subcellular location">
    <subcellularLocation>
        <location evidence="1">Cytoplasm</location>
    </subcellularLocation>
</comment>
<comment type="similarity">
    <text evidence="1">Belongs to the SUA5 family. TsaC subfamily.</text>
</comment>
<comment type="sequence caution" evidence="2">
    <conflict type="erroneous initiation">
        <sequence resource="EMBL-CDS" id="ABE09164"/>
    </conflict>
</comment>
<gene>
    <name evidence="1" type="primary">tsaC</name>
    <name type="synonym">rimN</name>
    <name type="ordered locus">UTI89_C3727</name>
</gene>
<keyword id="KW-0067">ATP-binding</keyword>
<keyword id="KW-0963">Cytoplasm</keyword>
<keyword id="KW-0547">Nucleotide-binding</keyword>
<keyword id="KW-0548">Nucleotidyltransferase</keyword>
<keyword id="KW-0808">Transferase</keyword>
<keyword id="KW-0819">tRNA processing</keyword>
<sequence length="190" mass="20641">MNNNLQGDAIAAAIDVLNEERVIAYPTEAVFGVGCDPDSETAVMRLLELKQRPVDKGLILIAANYEQLKPYIDDTMLTDAQRETIFSRWPGPVTFVFPAPATTPRWLTGRFDSLAVRVTDHPLVVALCQAYGKPLVSTSANLSGLPPCRTVDEVRAQFGAAFPVVPGETGGRLNPSEIRDALTGELFRQG</sequence>
<dbReference type="EC" id="2.7.7.87" evidence="1"/>
<dbReference type="EMBL" id="CP000243">
    <property type="protein sequence ID" value="ABE09164.1"/>
    <property type="status" value="ALT_INIT"/>
    <property type="molecule type" value="Genomic_DNA"/>
</dbReference>
<dbReference type="RefSeq" id="WP_001297709.1">
    <property type="nucleotide sequence ID" value="NZ_CP064825.1"/>
</dbReference>
<dbReference type="SMR" id="Q1R650"/>
<dbReference type="GeneID" id="75204135"/>
<dbReference type="KEGG" id="eci:UTI89_C3727"/>
<dbReference type="HOGENOM" id="CLU_031397_6_0_6"/>
<dbReference type="Proteomes" id="UP000001952">
    <property type="component" value="Chromosome"/>
</dbReference>
<dbReference type="GO" id="GO:0005737">
    <property type="term" value="C:cytoplasm"/>
    <property type="evidence" value="ECO:0007669"/>
    <property type="project" value="UniProtKB-SubCell"/>
</dbReference>
<dbReference type="GO" id="GO:0005524">
    <property type="term" value="F:ATP binding"/>
    <property type="evidence" value="ECO:0007669"/>
    <property type="project" value="UniProtKB-UniRule"/>
</dbReference>
<dbReference type="GO" id="GO:0003725">
    <property type="term" value="F:double-stranded RNA binding"/>
    <property type="evidence" value="ECO:0007669"/>
    <property type="project" value="InterPro"/>
</dbReference>
<dbReference type="GO" id="GO:0061710">
    <property type="term" value="F:L-threonylcarbamoyladenylate synthase"/>
    <property type="evidence" value="ECO:0007669"/>
    <property type="project" value="UniProtKB-EC"/>
</dbReference>
<dbReference type="GO" id="GO:0000049">
    <property type="term" value="F:tRNA binding"/>
    <property type="evidence" value="ECO:0007669"/>
    <property type="project" value="TreeGrafter"/>
</dbReference>
<dbReference type="GO" id="GO:0006450">
    <property type="term" value="P:regulation of translational fidelity"/>
    <property type="evidence" value="ECO:0007669"/>
    <property type="project" value="TreeGrafter"/>
</dbReference>
<dbReference type="GO" id="GO:0002949">
    <property type="term" value="P:tRNA threonylcarbamoyladenosine modification"/>
    <property type="evidence" value="ECO:0007669"/>
    <property type="project" value="UniProtKB-UniRule"/>
</dbReference>
<dbReference type="FunFam" id="3.90.870.10:FF:000004">
    <property type="entry name" value="Threonylcarbamoyl-AMP synthase"/>
    <property type="match status" value="1"/>
</dbReference>
<dbReference type="Gene3D" id="3.90.870.10">
    <property type="entry name" value="DHBP synthase"/>
    <property type="match status" value="1"/>
</dbReference>
<dbReference type="HAMAP" id="MF_01852">
    <property type="entry name" value="TsaC"/>
    <property type="match status" value="1"/>
</dbReference>
<dbReference type="InterPro" id="IPR017945">
    <property type="entry name" value="DHBP_synth_RibB-like_a/b_dom"/>
</dbReference>
<dbReference type="InterPro" id="IPR006070">
    <property type="entry name" value="Sua5-like_dom"/>
</dbReference>
<dbReference type="InterPro" id="IPR023535">
    <property type="entry name" value="TC-AMP_synthase"/>
</dbReference>
<dbReference type="InterPro" id="IPR050156">
    <property type="entry name" value="TC-AMP_synthase_SUA5"/>
</dbReference>
<dbReference type="NCBIfam" id="NF007919">
    <property type="entry name" value="PRK10634.1"/>
    <property type="match status" value="1"/>
</dbReference>
<dbReference type="PANTHER" id="PTHR17490">
    <property type="entry name" value="SUA5"/>
    <property type="match status" value="1"/>
</dbReference>
<dbReference type="PANTHER" id="PTHR17490:SF18">
    <property type="entry name" value="THREONYLCARBAMOYL-AMP SYNTHASE"/>
    <property type="match status" value="1"/>
</dbReference>
<dbReference type="Pfam" id="PF01300">
    <property type="entry name" value="Sua5_yciO_yrdC"/>
    <property type="match status" value="1"/>
</dbReference>
<dbReference type="SUPFAM" id="SSF55821">
    <property type="entry name" value="YrdC/RibB"/>
    <property type="match status" value="1"/>
</dbReference>
<dbReference type="PROSITE" id="PS51163">
    <property type="entry name" value="YRDC"/>
    <property type="match status" value="1"/>
</dbReference>
<feature type="chain" id="PRO_0000352915" description="Threonylcarbamoyl-AMP synthase">
    <location>
        <begin position="1"/>
        <end position="190"/>
    </location>
</feature>
<feature type="domain" description="YrdC-like" evidence="1">
    <location>
        <begin position="7"/>
        <end position="190"/>
    </location>
</feature>
<reference key="1">
    <citation type="journal article" date="2006" name="Proc. Natl. Acad. Sci. U.S.A.">
        <title>Identification of genes subject to positive selection in uropathogenic strains of Escherichia coli: a comparative genomics approach.</title>
        <authorList>
            <person name="Chen S.L."/>
            <person name="Hung C.-S."/>
            <person name="Xu J."/>
            <person name="Reigstad C.S."/>
            <person name="Magrini V."/>
            <person name="Sabo A."/>
            <person name="Blasiar D."/>
            <person name="Bieri T."/>
            <person name="Meyer R.R."/>
            <person name="Ozersky P."/>
            <person name="Armstrong J.R."/>
            <person name="Fulton R.S."/>
            <person name="Latreille J.P."/>
            <person name="Spieth J."/>
            <person name="Hooton T.M."/>
            <person name="Mardis E.R."/>
            <person name="Hultgren S.J."/>
            <person name="Gordon J.I."/>
        </authorList>
    </citation>
    <scope>NUCLEOTIDE SEQUENCE [LARGE SCALE GENOMIC DNA]</scope>
    <source>
        <strain>UTI89 / UPEC</strain>
    </source>
</reference>
<accession>Q1R650</accession>
<protein>
    <recommendedName>
        <fullName evidence="1">Threonylcarbamoyl-AMP synthase</fullName>
        <shortName evidence="1">TC-AMP synthase</shortName>
        <ecNumber evidence="1">2.7.7.87</ecNumber>
    </recommendedName>
    <alternativeName>
        <fullName evidence="1">L-threonylcarbamoyladenylate synthase</fullName>
    </alternativeName>
    <alternativeName>
        <fullName evidence="1">t(6)A37 threonylcarbamoyladenosine biosynthesis protein TsaC</fullName>
    </alternativeName>
    <alternativeName>
        <fullName evidence="1">tRNA threonylcarbamoyladenosine biosynthesis protein TsaC</fullName>
    </alternativeName>
</protein>
<organism>
    <name type="scientific">Escherichia coli (strain UTI89 / UPEC)</name>
    <dbReference type="NCBI Taxonomy" id="364106"/>
    <lineage>
        <taxon>Bacteria</taxon>
        <taxon>Pseudomonadati</taxon>
        <taxon>Pseudomonadota</taxon>
        <taxon>Gammaproteobacteria</taxon>
        <taxon>Enterobacterales</taxon>
        <taxon>Enterobacteriaceae</taxon>
        <taxon>Escherichia</taxon>
    </lineage>
</organism>
<name>TSAC_ECOUT</name>